<proteinExistence type="evidence at protein level"/>
<comment type="subcellular location">
    <subcellularLocation>
        <location evidence="5">Secreted</location>
    </subcellularLocation>
</comment>
<comment type="tissue specificity">
    <text evidence="3">In the brain, expressed in 2 large cells in the lateral neurons in each optic lobe, 2 slightly bigger cells on both sides of the tritocerebrum, around 14 small cells in the dorsal area, around 13 cells in the subesophageal ganglion, and in the central brain.</text>
</comment>
<comment type="mass spectrometry">
    <molecule>MudFMRFamide-2</molecule>
</comment>
<comment type="mass spectrometry">
    <molecule>MudFMRFamide-3</molecule>
</comment>
<comment type="mass spectrometry">
    <molecule>MudFMRFamide-4</molecule>
</comment>
<comment type="mass spectrometry">
    <molecule>MudFMRFamide-5</molecule>
</comment>
<comment type="mass spectrometry">
    <molecule>MudFMRFamide-6</molecule>
</comment>
<comment type="mass spectrometry">
    <molecule>MudFMRFamide-7</molecule>
</comment>
<comment type="mass spectrometry">
    <molecule>MudFMRFamide-8</molecule>
</comment>
<comment type="mass spectrometry">
    <molecule>MudFMRFamide-9</molecule>
</comment>
<comment type="mass spectrometry">
    <molecule>MudFMRFamide-8</molecule>
</comment>
<comment type="mass spectrometry">
    <molecule>MudFMRFamide-9</molecule>
</comment>
<comment type="mass spectrometry">
    <molecule>MudFMRFamide-14</molecule>
</comment>
<comment type="mass spectrometry">
    <molecule>MudFMRFamide-15</molecule>
</comment>
<comment type="mass spectrometry">
    <molecule>MudFMRFamide-17</molecule>
</comment>
<comment type="mass spectrometry">
    <molecule>MudFMRFamide-16</molecule>
</comment>
<comment type="mass spectrometry">
    <molecule>MudFMRFamide-18</molecule>
</comment>
<comment type="similarity">
    <text evidence="1">Belongs to the FARP (FMRFamide related peptide) family.</text>
</comment>
<accession>A6P3B2</accession>
<evidence type="ECO:0000255" key="1"/>
<evidence type="ECO:0000256" key="2">
    <source>
        <dbReference type="SAM" id="MobiDB-lite"/>
    </source>
</evidence>
<evidence type="ECO:0000269" key="3">
    <source>
    </source>
</evidence>
<evidence type="ECO:0000269" key="4">
    <source>
    </source>
</evidence>
<evidence type="ECO:0000305" key="5"/>
<evidence type="ECO:0000312" key="6">
    <source>
        <dbReference type="EMBL" id="BAF73475.1"/>
    </source>
</evidence>
<reference evidence="5 6" key="1">
    <citation type="journal article" date="2007" name="J. Biochem.">
        <title>Double-labelled in situ hybridization reveals the lack of co-localization of mRNAs for the circadian neuropeptide PDF and FMRFamide in brains of the flies Musca domestica and Drosophila melanogaster.</title>
        <authorList>
            <person name="Matsuhima A."/>
            <person name="Takano K."/>
            <person name="Yoshida T."/>
            <person name="Takeda Y."/>
            <person name="Yokotani S."/>
            <person name="Shimohigashi Y."/>
            <person name="Shimohigashi M."/>
        </authorList>
    </citation>
    <scope>NUCLEOTIDE SEQUENCE [MRNA]</scope>
    <scope>TISSUE SPECIFICITY</scope>
    <source>
        <tissue evidence="6">Brain</tissue>
    </source>
</reference>
<reference evidence="5" key="2">
    <citation type="journal article" date="2009" name="Gen. Comp. Endocrinol.">
        <title>Extended FMRFamides in dipteran insects: conservative expression in the neuroendocrine system is accompanied by rapid sequence evolution.</title>
        <authorList>
            <person name="Rahman M.M."/>
            <person name="Fromm B."/>
            <person name="Neupert S."/>
            <person name="Kreusch S."/>
            <person name="Predel R."/>
        </authorList>
    </citation>
    <scope>PROTEIN SEQUENCE OF 173-179; 182-196; 199-208; 211-219; 222-230; 233-241; 244-253; 256-265; 268-277; 280-289; 292-301; 304-313; 316-325; 328-337; 340-346; 349-359 AND 362-372</scope>
    <scope>MASS SPECTROMETRY</scope>
    <scope>AMIDATION AT PHE-179; PHE-196; PHE-208; PHE-219; PHE-230; PHE-241; PHE-253; PHE-265; PHE-277; PHE-289; PHE-301; PHE-313; PHE-325; PHE-337; PHE-346; PHE-359 AND PHE-372</scope>
    <source>
        <tissue evidence="4">Dorsal ganglionic sheath</tissue>
    </source>
</reference>
<dbReference type="EMBL" id="AB214648">
    <property type="protein sequence ID" value="BAF73475.1"/>
    <property type="molecule type" value="mRNA"/>
</dbReference>
<dbReference type="STRING" id="7370.A6P3B2"/>
<dbReference type="VEuPathDB" id="VectorBase:MDOA012531"/>
<dbReference type="VEuPathDB" id="VectorBase:MDOMA2_020353"/>
<dbReference type="eggNOG" id="ENOG502SDD0">
    <property type="taxonomic scope" value="Eukaryota"/>
</dbReference>
<dbReference type="Proteomes" id="UP000694905">
    <property type="component" value="Unplaced"/>
</dbReference>
<dbReference type="GO" id="GO:0005576">
    <property type="term" value="C:extracellular region"/>
    <property type="evidence" value="ECO:0007669"/>
    <property type="project" value="UniProtKB-SubCell"/>
</dbReference>
<dbReference type="GO" id="GO:0007218">
    <property type="term" value="P:neuropeptide signaling pathway"/>
    <property type="evidence" value="ECO:0007669"/>
    <property type="project" value="UniProtKB-KW"/>
</dbReference>
<dbReference type="InterPro" id="IPR002544">
    <property type="entry name" value="FMRFamid-related_peptide-like"/>
</dbReference>
<dbReference type="InterPro" id="IPR051041">
    <property type="entry name" value="FMRFamide-related_np"/>
</dbReference>
<dbReference type="PANTHER" id="PTHR20986">
    <property type="entry name" value="FMRFAMIDE-RELATED PEPTIDES"/>
    <property type="match status" value="1"/>
</dbReference>
<dbReference type="PANTHER" id="PTHR20986:SF22">
    <property type="entry name" value="FMRFAMIDE-RELATED PEPTIDES"/>
    <property type="match status" value="1"/>
</dbReference>
<dbReference type="Pfam" id="PF01581">
    <property type="entry name" value="FARP"/>
    <property type="match status" value="7"/>
</dbReference>
<name>FMRF_MUSDO</name>
<keyword id="KW-0027">Amidation</keyword>
<keyword id="KW-0165">Cleavage on pair of basic residues</keyword>
<keyword id="KW-0903">Direct protein sequencing</keyword>
<keyword id="KW-0527">Neuropeptide</keyword>
<keyword id="KW-1185">Reference proteome</keyword>
<keyword id="KW-0677">Repeat</keyword>
<keyword id="KW-0964">Secreted</keyword>
<keyword id="KW-0732">Signal</keyword>
<protein>
    <recommendedName>
        <fullName>FMRFamide neuropeptides</fullName>
    </recommendedName>
    <component>
        <recommendedName>
            <fullName>MudFMRFamide-2</fullName>
        </recommendedName>
    </component>
    <component>
        <recommendedName>
            <fullName>MudFMRFamide-3</fullName>
        </recommendedName>
    </component>
    <component>
        <recommendedName>
            <fullName>MudFMRFamide-4</fullName>
        </recommendedName>
    </component>
    <component>
        <recommendedName>
            <fullName>MudFMRFamide-5</fullName>
        </recommendedName>
    </component>
    <component>
        <recommendedName>
            <fullName>MudFMRFamide-6</fullName>
        </recommendedName>
    </component>
    <component>
        <recommendedName>
            <fullName>MudFMRFamide-7</fullName>
        </recommendedName>
    </component>
    <component>
        <recommendedName>
            <fullName>MudFMRFamide-8</fullName>
        </recommendedName>
        <alternativeName>
            <fullName>MudFMRFamide-10</fullName>
        </alternativeName>
    </component>
    <component>
        <recommendedName>
            <fullName>MudFMRFamide-9</fullName>
        </recommendedName>
        <alternativeName>
            <fullName>MudFMRFamide-11</fullName>
        </alternativeName>
        <alternativeName>
            <fullName>MudFMRFamide-12</fullName>
        </alternativeName>
        <alternativeName>
            <fullName>MudFMRFamide-13</fullName>
        </alternativeName>
    </component>
    <component>
        <recommendedName>
            <fullName>MudFMRFamide-14</fullName>
        </recommendedName>
    </component>
    <component>
        <recommendedName>
            <fullName>MudFMRFamide-15</fullName>
        </recommendedName>
    </component>
    <component>
        <recommendedName>
            <fullName>MudFMRFamide-17</fullName>
        </recommendedName>
    </component>
    <component>
        <recommendedName>
            <fullName>MudFMRFamide-16</fullName>
        </recommendedName>
    </component>
    <component>
        <recommendedName>
            <fullName>MudFMRFamide-18</fullName>
        </recommendedName>
    </component>
</protein>
<organism>
    <name type="scientific">Musca domestica</name>
    <name type="common">House fly</name>
    <dbReference type="NCBI Taxonomy" id="7370"/>
    <lineage>
        <taxon>Eukaryota</taxon>
        <taxon>Metazoa</taxon>
        <taxon>Ecdysozoa</taxon>
        <taxon>Arthropoda</taxon>
        <taxon>Hexapoda</taxon>
        <taxon>Insecta</taxon>
        <taxon>Pterygota</taxon>
        <taxon>Neoptera</taxon>
        <taxon>Endopterygota</taxon>
        <taxon>Diptera</taxon>
        <taxon>Brachycera</taxon>
        <taxon>Muscomorpha</taxon>
        <taxon>Muscoidea</taxon>
        <taxon>Muscidae</taxon>
        <taxon>Musca</taxon>
    </lineage>
</organism>
<feature type="signal peptide" evidence="1">
    <location>
        <begin position="1"/>
        <end position="21"/>
    </location>
</feature>
<feature type="propeptide" id="PRO_0000371776" evidence="4">
    <location>
        <begin position="22"/>
        <end position="172"/>
    </location>
</feature>
<feature type="peptide" id="PRO_0000371777" description="MudFMRFamide-2" evidence="4">
    <location>
        <begin position="173"/>
        <end position="179"/>
    </location>
</feature>
<feature type="peptide" id="PRO_0000371778" description="MudFMRFamide-3" evidence="4">
    <location>
        <begin position="182"/>
        <end position="196"/>
    </location>
</feature>
<feature type="peptide" id="PRO_0000371779" description="MudFMRFamide-4" evidence="4">
    <location>
        <begin position="199"/>
        <end position="208"/>
    </location>
</feature>
<feature type="peptide" id="PRO_0000371780" description="MudFMRFamide-5" evidence="4">
    <location>
        <begin position="211"/>
        <end position="219"/>
    </location>
</feature>
<feature type="peptide" id="PRO_0000371781" description="MudFMRFamide-6" evidence="4">
    <location>
        <begin position="222"/>
        <end position="230"/>
    </location>
</feature>
<feature type="peptide" id="PRO_0000371782" description="MudFMRFamide-7" evidence="4">
    <location>
        <begin position="233"/>
        <end position="241"/>
    </location>
</feature>
<feature type="peptide" id="PRO_0000371783" description="MudFMRFamide-8" evidence="4">
    <location>
        <begin position="244"/>
        <end position="253"/>
    </location>
</feature>
<feature type="peptide" id="PRO_0000371784" description="MudFMRFamide-9" evidence="4">
    <location>
        <begin position="256"/>
        <end position="265"/>
    </location>
</feature>
<feature type="peptide" id="PRO_0000371785" description="MudFMRFamide-8" evidence="4">
    <location>
        <begin position="268"/>
        <end position="277"/>
    </location>
</feature>
<feature type="peptide" id="PRO_0000371786" description="MudFMRFamide-9" evidence="4">
    <location>
        <begin position="280"/>
        <end position="289"/>
    </location>
</feature>
<feature type="peptide" id="PRO_0000371787" description="MudFMRFamide-9" evidence="4">
    <location>
        <begin position="292"/>
        <end position="301"/>
    </location>
</feature>
<feature type="peptide" id="PRO_0000371788" description="MudFMRFamide-9" evidence="4">
    <location>
        <begin position="304"/>
        <end position="313"/>
    </location>
</feature>
<feature type="peptide" id="PRO_0000371789" description="MudFMRFamide-14" evidence="4">
    <location>
        <begin position="316"/>
        <end position="325"/>
    </location>
</feature>
<feature type="peptide" id="PRO_0000371790" description="MudFMRFamide-15" evidence="4">
    <location>
        <begin position="328"/>
        <end position="337"/>
    </location>
</feature>
<feature type="peptide" id="PRO_0000371791" description="MudFMRFamide-17" evidence="4">
    <location>
        <begin position="340"/>
        <end position="346"/>
    </location>
</feature>
<feature type="peptide" id="PRO_0000371792" description="MudFMRFamide-16" evidence="4">
    <location>
        <begin position="349"/>
        <end position="359"/>
    </location>
</feature>
<feature type="peptide" id="PRO_0000371793" description="MudFMRFamide-18" evidence="4">
    <location>
        <begin position="362"/>
        <end position="372"/>
    </location>
</feature>
<feature type="propeptide" id="PRO_0000371794" evidence="4">
    <location>
        <begin position="375"/>
        <end position="388"/>
    </location>
</feature>
<feature type="region of interest" description="Disordered" evidence="2">
    <location>
        <begin position="40"/>
        <end position="74"/>
    </location>
</feature>
<feature type="region of interest" description="Disordered" evidence="2">
    <location>
        <begin position="360"/>
        <end position="388"/>
    </location>
</feature>
<feature type="compositionally biased region" description="Polar residues" evidence="2">
    <location>
        <begin position="64"/>
        <end position="74"/>
    </location>
</feature>
<feature type="compositionally biased region" description="Basic and acidic residues" evidence="2">
    <location>
        <begin position="374"/>
        <end position="388"/>
    </location>
</feature>
<feature type="modified residue" description="Phenylalanine amide" evidence="4">
    <location>
        <position position="179"/>
    </location>
</feature>
<feature type="modified residue" description="Phenylalanine amide" evidence="4">
    <location>
        <position position="196"/>
    </location>
</feature>
<feature type="modified residue" description="Phenylalanine amide" evidence="4">
    <location>
        <position position="208"/>
    </location>
</feature>
<feature type="modified residue" description="Phenylalanine amide" evidence="4">
    <location>
        <position position="219"/>
    </location>
</feature>
<feature type="modified residue" description="Phenylalanine amide" evidence="4">
    <location>
        <position position="230"/>
    </location>
</feature>
<feature type="modified residue" description="Phenylalanine amide" evidence="4">
    <location>
        <position position="241"/>
    </location>
</feature>
<feature type="modified residue" description="Phenylalanine amide" evidence="4">
    <location>
        <position position="253"/>
    </location>
</feature>
<feature type="modified residue" description="Phenylalanine amide" evidence="4">
    <location>
        <position position="265"/>
    </location>
</feature>
<feature type="modified residue" description="Phenylalanine amide" evidence="4">
    <location>
        <position position="277"/>
    </location>
</feature>
<feature type="modified residue" description="Phenylalanine amide" evidence="4">
    <location>
        <position position="289"/>
    </location>
</feature>
<feature type="modified residue" description="Phenylalanine amide" evidence="4">
    <location>
        <position position="301"/>
    </location>
</feature>
<feature type="modified residue" description="Phenylalanine amide" evidence="4">
    <location>
        <position position="313"/>
    </location>
</feature>
<feature type="modified residue" description="Phenylalanine amide" evidence="4">
    <location>
        <position position="325"/>
    </location>
</feature>
<feature type="modified residue" description="Phenylalanine amide" evidence="4">
    <location>
        <position position="337"/>
    </location>
</feature>
<feature type="modified residue" description="Phenylalanine amide" evidence="4">
    <location>
        <position position="346"/>
    </location>
</feature>
<feature type="modified residue" description="Phenylalanine amide" evidence="4">
    <location>
        <position position="359"/>
    </location>
</feature>
<feature type="modified residue" description="Phenylalanine amide" evidence="4">
    <location>
        <position position="372"/>
    </location>
</feature>
<sequence>MVAPLLVFLFSLQLCHTTSWAYVGGNSLNSNSLHASYSEFPAGTSNEVPEDAANGQDDNDDSQLTEPNDNNAPLVQSIDDETEMQFPKPIQWVSIDHLRNSIILRFQNPTPKILNKLDPEEMKRLRSLQENAMRWGKRSYESYPLNRNGLADKSSVGRMGFLSNHQVIRDSRGDNFMRFGRSVGGSGGNDDNFMRFGRASGSSDFMRFGRAGQDNFMRFGRAAGQDFMRFGRGSGQDFMRFGRSPGSQDFMRFGRNPGSQDFMRFGRSPGSQDFMRFGRNPGSQDFMRFGRNPGSQDFMRFGRNPGSQDFMRFGRASGGQDFMRFGRAPSGQDFMRFGRPDNFMRFGRTPAQSSDFMRFGRTPTQSSDFMRFGKSLDKSENKTSDLQK</sequence>
<gene>
    <name evidence="6" type="primary">fmrf</name>
</gene>